<accession>A5UBJ0</accession>
<dbReference type="EC" id="7.-.-.-" evidence="1"/>
<dbReference type="EMBL" id="CP000671">
    <property type="protein sequence ID" value="ABQ98141.1"/>
    <property type="molecule type" value="Genomic_DNA"/>
</dbReference>
<dbReference type="SMR" id="A5UBJ0"/>
<dbReference type="KEGG" id="hip:CGSHiEE_03610"/>
<dbReference type="HOGENOM" id="CLU_010808_2_1_6"/>
<dbReference type="GO" id="GO:0005886">
    <property type="term" value="C:plasma membrane"/>
    <property type="evidence" value="ECO:0007669"/>
    <property type="project" value="UniProtKB-SubCell"/>
</dbReference>
<dbReference type="GO" id="GO:0051539">
    <property type="term" value="F:4 iron, 4 sulfur cluster binding"/>
    <property type="evidence" value="ECO:0007669"/>
    <property type="project" value="UniProtKB-KW"/>
</dbReference>
<dbReference type="GO" id="GO:0009055">
    <property type="term" value="F:electron transfer activity"/>
    <property type="evidence" value="ECO:0007669"/>
    <property type="project" value="InterPro"/>
</dbReference>
<dbReference type="GO" id="GO:0046872">
    <property type="term" value="F:metal ion binding"/>
    <property type="evidence" value="ECO:0007669"/>
    <property type="project" value="UniProtKB-KW"/>
</dbReference>
<dbReference type="GO" id="GO:0022900">
    <property type="term" value="P:electron transport chain"/>
    <property type="evidence" value="ECO:0007669"/>
    <property type="project" value="UniProtKB-UniRule"/>
</dbReference>
<dbReference type="Gene3D" id="3.30.70.20">
    <property type="match status" value="1"/>
</dbReference>
<dbReference type="Gene3D" id="3.40.50.11540">
    <property type="entry name" value="NADH-ubiquinone oxidoreductase 51kDa subunit"/>
    <property type="match status" value="1"/>
</dbReference>
<dbReference type="HAMAP" id="MF_00461">
    <property type="entry name" value="RsxC_RnfC"/>
    <property type="match status" value="1"/>
</dbReference>
<dbReference type="InterPro" id="IPR017896">
    <property type="entry name" value="4Fe4S_Fe-S-bd"/>
</dbReference>
<dbReference type="InterPro" id="IPR017900">
    <property type="entry name" value="4Fe4S_Fe_S_CS"/>
</dbReference>
<dbReference type="InterPro" id="IPR010208">
    <property type="entry name" value="Ion_transpt_RnfC/RsxC"/>
</dbReference>
<dbReference type="InterPro" id="IPR011538">
    <property type="entry name" value="Nuo51_FMN-bd"/>
</dbReference>
<dbReference type="InterPro" id="IPR037225">
    <property type="entry name" value="Nuo51_FMN-bd_sf"/>
</dbReference>
<dbReference type="InterPro" id="IPR026902">
    <property type="entry name" value="RnfC_N"/>
</dbReference>
<dbReference type="NCBIfam" id="NF003454">
    <property type="entry name" value="PRK05035.1"/>
    <property type="match status" value="1"/>
</dbReference>
<dbReference type="NCBIfam" id="TIGR01945">
    <property type="entry name" value="rnfC"/>
    <property type="match status" value="1"/>
</dbReference>
<dbReference type="PANTHER" id="PTHR43034">
    <property type="entry name" value="ION-TRANSLOCATING OXIDOREDUCTASE COMPLEX SUBUNIT C"/>
    <property type="match status" value="1"/>
</dbReference>
<dbReference type="PANTHER" id="PTHR43034:SF2">
    <property type="entry name" value="ION-TRANSLOCATING OXIDOREDUCTASE COMPLEX SUBUNIT C"/>
    <property type="match status" value="1"/>
</dbReference>
<dbReference type="Pfam" id="PF01512">
    <property type="entry name" value="Complex1_51K"/>
    <property type="match status" value="1"/>
</dbReference>
<dbReference type="Pfam" id="PF12838">
    <property type="entry name" value="Fer4_7"/>
    <property type="match status" value="1"/>
</dbReference>
<dbReference type="Pfam" id="PF13375">
    <property type="entry name" value="RnfC_N"/>
    <property type="match status" value="1"/>
</dbReference>
<dbReference type="SUPFAM" id="SSF46548">
    <property type="entry name" value="alpha-helical ferredoxin"/>
    <property type="match status" value="1"/>
</dbReference>
<dbReference type="SUPFAM" id="SSF142019">
    <property type="entry name" value="Nqo1 FMN-binding domain-like"/>
    <property type="match status" value="1"/>
</dbReference>
<dbReference type="PROSITE" id="PS00198">
    <property type="entry name" value="4FE4S_FER_1"/>
    <property type="match status" value="2"/>
</dbReference>
<dbReference type="PROSITE" id="PS51379">
    <property type="entry name" value="4FE4S_FER_2"/>
    <property type="match status" value="2"/>
</dbReference>
<name>RNFC_HAEIE</name>
<gene>
    <name evidence="1" type="primary">rnfC</name>
    <name type="ordered locus">CGSHiEE_03610</name>
</gene>
<proteinExistence type="inferred from homology"/>
<feature type="chain" id="PRO_1000013608" description="Ion-translocating oxidoreductase complex subunit C">
    <location>
        <begin position="1"/>
        <end position="651"/>
    </location>
</feature>
<feature type="domain" description="4Fe-4S ferredoxin-type 1" evidence="1">
    <location>
        <begin position="368"/>
        <end position="398"/>
    </location>
</feature>
<feature type="domain" description="4Fe-4S ferredoxin-type 2" evidence="1">
    <location>
        <begin position="408"/>
        <end position="437"/>
    </location>
</feature>
<feature type="region of interest" description="Disordered" evidence="2">
    <location>
        <begin position="465"/>
        <end position="565"/>
    </location>
</feature>
<feature type="region of interest" description="Disordered" evidence="2">
    <location>
        <begin position="583"/>
        <end position="624"/>
    </location>
</feature>
<feature type="compositionally biased region" description="Basic and acidic residues" evidence="2">
    <location>
        <begin position="465"/>
        <end position="477"/>
    </location>
</feature>
<feature type="compositionally biased region" description="Basic and acidic residues" evidence="2">
    <location>
        <begin position="485"/>
        <end position="513"/>
    </location>
</feature>
<feature type="compositionally biased region" description="Polar residues" evidence="2">
    <location>
        <begin position="554"/>
        <end position="564"/>
    </location>
</feature>
<feature type="compositionally biased region" description="Polar residues" evidence="2">
    <location>
        <begin position="587"/>
        <end position="600"/>
    </location>
</feature>
<feature type="compositionally biased region" description="Basic and acidic residues" evidence="2">
    <location>
        <begin position="602"/>
        <end position="614"/>
    </location>
</feature>
<feature type="binding site" evidence="1">
    <location>
        <position position="378"/>
    </location>
    <ligand>
        <name>[4Fe-4S] cluster</name>
        <dbReference type="ChEBI" id="CHEBI:49883"/>
        <label>1</label>
    </ligand>
</feature>
<feature type="binding site" evidence="1">
    <location>
        <position position="381"/>
    </location>
    <ligand>
        <name>[4Fe-4S] cluster</name>
        <dbReference type="ChEBI" id="CHEBI:49883"/>
        <label>1</label>
    </ligand>
</feature>
<feature type="binding site" evidence="1">
    <location>
        <position position="384"/>
    </location>
    <ligand>
        <name>[4Fe-4S] cluster</name>
        <dbReference type="ChEBI" id="CHEBI:49883"/>
        <label>1</label>
    </ligand>
</feature>
<feature type="binding site" evidence="1">
    <location>
        <position position="388"/>
    </location>
    <ligand>
        <name>[4Fe-4S] cluster</name>
        <dbReference type="ChEBI" id="CHEBI:49883"/>
        <label>2</label>
    </ligand>
</feature>
<feature type="binding site" evidence="1">
    <location>
        <position position="417"/>
    </location>
    <ligand>
        <name>[4Fe-4S] cluster</name>
        <dbReference type="ChEBI" id="CHEBI:49883"/>
        <label>2</label>
    </ligand>
</feature>
<feature type="binding site" evidence="1">
    <location>
        <position position="420"/>
    </location>
    <ligand>
        <name>[4Fe-4S] cluster</name>
        <dbReference type="ChEBI" id="CHEBI:49883"/>
        <label>2</label>
    </ligand>
</feature>
<feature type="binding site" evidence="1">
    <location>
        <position position="423"/>
    </location>
    <ligand>
        <name>[4Fe-4S] cluster</name>
        <dbReference type="ChEBI" id="CHEBI:49883"/>
        <label>2</label>
    </ligand>
</feature>
<feature type="binding site" evidence="1">
    <location>
        <position position="427"/>
    </location>
    <ligand>
        <name>[4Fe-4S] cluster</name>
        <dbReference type="ChEBI" id="CHEBI:49883"/>
        <label>1</label>
    </ligand>
</feature>
<sequence>MADVLSRFNSGKLWDFKGGIHPPEMKSQSNSQPLRHLPLGTDFYIPLKQHLGTTGNLLIKEGDYVLKGQALTKGDGLRMLPVHAPTSGTIKSIKPYVATHPSGLDEPTIHLQSDGLDQWIERNPIDDFSTLSPEQLIHKIYQAGIAGLGGAVFPTAAKIQSAEQKVKLLIINGAECEPYITCDDRLMRERADEIIKGIRILRYILHPEKVVIAIEDNKPEAISAIRNALQGANDISVRVIPTKYPSGATKQLIYLLTGIEVPSGERSSSIGVLMQNVGTMFAIKRAVINDEPLIERVVTLTGNKIAEKGNYWVRLGTPISQILSDAGYQFDKHFPIFAGGPMMGLELPNLNAPVTKLVNCLLAPDYLEYAEPEAEQACIRCSSCSDACPVNLMPQQLYWFARSEDHKKSEEYALKDCIECGICAYVCPSHIPLIQYFRQEKAKIWQIKEKQKKSDEAKIRFEAKQARMEREEQERKARSQRAAQARREELAQTKGEDPVKAALERLKAKKANETESTQIKTLTSEKGEVLPDNTDLMAQRKARRLARQQAASQVENQEQQTQPTDAKKAVVAAAIARAKAKKLAQANSTSEAISNSQTAENEVEKTKSAVEKTQENSTALDPKKAAVAAAIARAKAKKLAKTQTTLENNQE</sequence>
<protein>
    <recommendedName>
        <fullName evidence="1">Ion-translocating oxidoreductase complex subunit C</fullName>
        <ecNumber evidence="1">7.-.-.-</ecNumber>
    </recommendedName>
    <alternativeName>
        <fullName evidence="1">Rnf electron transport complex subunit C</fullName>
    </alternativeName>
</protein>
<keyword id="KW-0004">4Fe-4S</keyword>
<keyword id="KW-0997">Cell inner membrane</keyword>
<keyword id="KW-1003">Cell membrane</keyword>
<keyword id="KW-0249">Electron transport</keyword>
<keyword id="KW-0408">Iron</keyword>
<keyword id="KW-0411">Iron-sulfur</keyword>
<keyword id="KW-0472">Membrane</keyword>
<keyword id="KW-0479">Metal-binding</keyword>
<keyword id="KW-0677">Repeat</keyword>
<keyword id="KW-1278">Translocase</keyword>
<keyword id="KW-0813">Transport</keyword>
<reference key="1">
    <citation type="journal article" date="2007" name="Genome Biol.">
        <title>Characterization and modeling of the Haemophilus influenzae core and supragenomes based on the complete genomic sequences of Rd and 12 clinical nontypeable strains.</title>
        <authorList>
            <person name="Hogg J.S."/>
            <person name="Hu F.Z."/>
            <person name="Janto B."/>
            <person name="Boissy R."/>
            <person name="Hayes J."/>
            <person name="Keefe R."/>
            <person name="Post J.C."/>
            <person name="Ehrlich G.D."/>
        </authorList>
    </citation>
    <scope>NUCLEOTIDE SEQUENCE [LARGE SCALE GENOMIC DNA]</scope>
    <source>
        <strain>PittEE</strain>
    </source>
</reference>
<organism>
    <name type="scientific">Haemophilus influenzae (strain PittEE)</name>
    <dbReference type="NCBI Taxonomy" id="374930"/>
    <lineage>
        <taxon>Bacteria</taxon>
        <taxon>Pseudomonadati</taxon>
        <taxon>Pseudomonadota</taxon>
        <taxon>Gammaproteobacteria</taxon>
        <taxon>Pasteurellales</taxon>
        <taxon>Pasteurellaceae</taxon>
        <taxon>Haemophilus</taxon>
    </lineage>
</organism>
<comment type="function">
    <text evidence="1">Part of a membrane-bound complex that couples electron transfer with translocation of ions across the membrane.</text>
</comment>
<comment type="cofactor">
    <cofactor evidence="1">
        <name>[4Fe-4S] cluster</name>
        <dbReference type="ChEBI" id="CHEBI:49883"/>
    </cofactor>
    <text evidence="1">Binds 2 [4Fe-4S] clusters per subunit.</text>
</comment>
<comment type="subunit">
    <text evidence="1">The complex is composed of six subunits: RnfA, RnfB, RnfC, RnfD, RnfE and RnfG.</text>
</comment>
<comment type="subcellular location">
    <subcellularLocation>
        <location evidence="1">Cell inner membrane</location>
        <topology evidence="1">Peripheral membrane protein</topology>
    </subcellularLocation>
</comment>
<comment type="similarity">
    <text evidence="1">Belongs to the 4Fe4S bacterial-type ferredoxin family. RnfC subfamily.</text>
</comment>
<evidence type="ECO:0000255" key="1">
    <source>
        <dbReference type="HAMAP-Rule" id="MF_00461"/>
    </source>
</evidence>
<evidence type="ECO:0000256" key="2">
    <source>
        <dbReference type="SAM" id="MobiDB-lite"/>
    </source>
</evidence>